<feature type="signal peptide" evidence="2">
    <location>
        <begin position="1"/>
        <end position="23"/>
    </location>
</feature>
<feature type="chain" id="PRO_0000232759" description="Protocadherin-11 X-linked">
    <location>
        <begin position="24"/>
        <end position="1347"/>
    </location>
</feature>
<feature type="topological domain" description="Extracellular" evidence="2">
    <location>
        <begin position="24"/>
        <end position="812"/>
    </location>
</feature>
<feature type="transmembrane region" description="Helical" evidence="2">
    <location>
        <begin position="813"/>
        <end position="833"/>
    </location>
</feature>
<feature type="topological domain" description="Cytoplasmic" evidence="2">
    <location>
        <begin position="834"/>
        <end position="1347"/>
    </location>
</feature>
<feature type="domain" description="Cadherin 1" evidence="3">
    <location>
        <begin position="26"/>
        <end position="139"/>
    </location>
</feature>
<feature type="domain" description="Cadherin 2" evidence="3">
    <location>
        <begin position="140"/>
        <end position="249"/>
    </location>
</feature>
<feature type="domain" description="Cadherin 3" evidence="3">
    <location>
        <begin position="250"/>
        <end position="355"/>
    </location>
</feature>
<feature type="domain" description="Cadherin 4" evidence="3">
    <location>
        <begin position="362"/>
        <end position="466"/>
    </location>
</feature>
<feature type="domain" description="Cadherin 5" evidence="3">
    <location>
        <begin position="467"/>
        <end position="570"/>
    </location>
</feature>
<feature type="domain" description="Cadherin 6" evidence="3">
    <location>
        <begin position="571"/>
        <end position="673"/>
    </location>
</feature>
<feature type="domain" description="Cadherin 7" evidence="3">
    <location>
        <begin position="677"/>
        <end position="795"/>
    </location>
</feature>
<feature type="region of interest" description="Disordered" evidence="4">
    <location>
        <begin position="1057"/>
        <end position="1091"/>
    </location>
</feature>
<feature type="region of interest" description="Disordered" evidence="4">
    <location>
        <begin position="1097"/>
        <end position="1116"/>
    </location>
</feature>
<feature type="region of interest" description="Disordered" evidence="4">
    <location>
        <begin position="1326"/>
        <end position="1347"/>
    </location>
</feature>
<feature type="glycosylation site" description="N-linked (GlcNAc...) asparagine" evidence="2">
    <location>
        <position position="27"/>
    </location>
</feature>
<feature type="glycosylation site" description="N-linked (GlcNAc...) asparagine" evidence="2">
    <location>
        <position position="48"/>
    </location>
</feature>
<feature type="glycosylation site" description="N-linked (GlcNAc...) asparagine" evidence="2">
    <location>
        <position position="54"/>
    </location>
</feature>
<feature type="glycosylation site" description="N-linked (GlcNAc...) asparagine" evidence="2">
    <location>
        <position position="344"/>
    </location>
</feature>
<feature type="glycosylation site" description="N-linked (GlcNAc...) asparagine" evidence="2">
    <location>
        <position position="553"/>
    </location>
</feature>
<feature type="glycosylation site" description="N-linked (GlcNAc...) asparagine" evidence="2">
    <location>
        <position position="773"/>
    </location>
</feature>
<feature type="splice variant" id="VSP_017988" description="In isoform 2." evidence="5">
    <original>PMKEVVRSCTPMKE</original>
    <variation>TDSRTSTIEICSEI</variation>
    <location>
        <begin position="1012"/>
        <end position="1025"/>
    </location>
</feature>
<feature type="splice variant" id="VSP_017989" description="In isoform 2." evidence="5">
    <location>
        <begin position="1026"/>
        <end position="1347"/>
    </location>
</feature>
<reference key="1">
    <citation type="submission" date="2003-03" db="EMBL/GenBank/DDBJ databases">
        <title>Protocadherin X/Y, a neural cell surface adhesion molecule subject to differential and domain-specific selection in the course of hominid evolution.</title>
        <authorList>
            <person name="Williams N.A."/>
            <person name="Crow T.J."/>
        </authorList>
    </citation>
    <scope>NUCLEOTIDE SEQUENCE [GENOMIC DNA]</scope>
</reference>
<keyword id="KW-0025">Alternative splicing</keyword>
<keyword id="KW-0106">Calcium</keyword>
<keyword id="KW-0130">Cell adhesion</keyword>
<keyword id="KW-1003">Cell membrane</keyword>
<keyword id="KW-0325">Glycoprotein</keyword>
<keyword id="KW-0472">Membrane</keyword>
<keyword id="KW-1185">Reference proteome</keyword>
<keyword id="KW-0677">Repeat</keyword>
<keyword id="KW-0732">Signal</keyword>
<keyword id="KW-0812">Transmembrane</keyword>
<keyword id="KW-1133">Transmembrane helix</keyword>
<proteinExistence type="inferred from homology"/>
<sequence length="1347" mass="147688">MDLLSGTYIFAVLLACVVFHSGAQEKNYTIREEMPENVLIGDLLKDLNLSLIPNKSLTTAMQFKLVYKTGDVPLIRIEEDTGEIFTTGARIDREKLCAGIPRDEHCFYEVEVAILPDEIFRLVKIRFLIEDINDNAPLFPATVINISIPENSAINSKYTLPAAVDPDVGINGVQNYELIKSQNMFGLDVIETPEGDKMPQLIVQKELDREKKDTYVMKVKVEDGGFPQRSSTAILQVSVTDTNDNHPVFKETEIEVSIPENAPVGTSVTQLHATDADIGENAKIHFSFSNLVSNIARRLFHLNATTGLITIKEPLDREETPNHKLLVLASDGGLMPARAMVLVNVTDVNDNVPSIDIRYIVNPVNDTVVLSENIPLNTKIALITVTDKDADHNGRVTCFTDHEIPFRLRPVFSNQFLLETAAYLDYESTKEYAIKLLAADAGKPPLNQSAMLFIKVKDENDNAPVFTQSFVTVSIPENNSPGIQLTKVSATDADSGPNAEINYLLGPDAPPEFSLDRRTGMLTVVKKLDREKEDKYLFTILAKDNGVPPLTSNVTVFVSIIDQNDNSPVFTHNEYNFYVPENLPRHGTVGLITVTDPDYGDNSAVTLSILDENDDFTIDSQTGVIRPNISFDREKQESYTFYVKAEDGGRVSRSSSAKVTINVVDVNDNKPVFIVPPSNYSYELVLPSTNPGTVVFQVIAVDNDTGMNAEVRYSIVGGNTRDLFAIDQETGNITLMEKCDVTDLGLHRVLVKANDLGQPDSLFSVVIVNLFVNESVTNATLINELVRKSIEAPVTPNTEIADVSSPTNDYVKILVAAVAGTITVVVVIFITAVVRCRQAPHLKAAQKNKQNSEWATPNPENRQMIMMKKRKKKKKHSPKNLLLNFVTIEETKADDVDSDGNRVTLDLPIDLEEQTMGKYDWVTTPTTFKPDSPDLARHYKSASPQPAFQIQPETPLNSKHHIIQELPLDNTFVACDSISKCSSSSSDPYSVSDCGYPVTTFEVPVSVHTRPPMKEVVRSCTPMKESTTMEIWIHPQPQRKSEGKVAGKSQRRVTFHLPEGSQESSSDGGLGDHDAGSLTSTSHGLPLGYPQEEYFDRATPSNRTEGDGNSDPESTFIPGLKKAAEITVQPTVEEASDNCTQECLIYGHSDACWMPASLDHSSSLQAQASALCHSPPLSQASTQHHSPPVTQTIALCHSPPVTQTIALCHSPPPIQVSALRHSPPLVQATALHHSPPSAQASALCYSPPLAQAAAISHSSPLPQVIALHRSQAQSSVSLQQGWVQGADGLCSVDQGVQGSATSQFYTMSERLHASDDSIKVIPLTTFTPRQQARPSRGDSPIMEEHPL</sequence>
<comment type="function">
    <text evidence="1">Potential calcium-dependent cell-adhesion protein.</text>
</comment>
<comment type="subcellular location">
    <subcellularLocation>
        <location evidence="5">Cell membrane</location>
        <topology evidence="5">Single-pass type I membrane protein</topology>
    </subcellularLocation>
</comment>
<comment type="alternative products">
    <event type="alternative splicing"/>
    <isoform>
        <id>Q6X862-1</id>
        <name>1</name>
        <sequence type="displayed"/>
    </isoform>
    <isoform>
        <id>Q6X862-2</id>
        <name>2</name>
        <sequence type="described" ref="VSP_017988 VSP_017989"/>
    </isoform>
</comment>
<name>PC11X_GORGO</name>
<evidence type="ECO:0000250" key="1"/>
<evidence type="ECO:0000255" key="2"/>
<evidence type="ECO:0000255" key="3">
    <source>
        <dbReference type="PROSITE-ProRule" id="PRU00043"/>
    </source>
</evidence>
<evidence type="ECO:0000256" key="4">
    <source>
        <dbReference type="SAM" id="MobiDB-lite"/>
    </source>
</evidence>
<evidence type="ECO:0000305" key="5"/>
<accession>Q6X862</accession>
<accession>Q6X863</accession>
<protein>
    <recommendedName>
        <fullName>Protocadherin-11 X-linked</fullName>
        <shortName>Protocadherin-11</shortName>
    </recommendedName>
    <alternativeName>
        <fullName>Protocadherin on the X chromosome</fullName>
    </alternativeName>
</protein>
<gene>
    <name type="primary">PCDH11X</name>
    <name type="synonym">PCDH11</name>
    <name type="synonym">PCDHX</name>
</gene>
<dbReference type="EMBL" id="AY249903">
    <property type="protein sequence ID" value="AAP79575.1"/>
    <property type="molecule type" value="Genomic_DNA"/>
</dbReference>
<dbReference type="EMBL" id="AY249901">
    <property type="protein sequence ID" value="AAP79575.1"/>
    <property type="status" value="JOINED"/>
    <property type="molecule type" value="Genomic_DNA"/>
</dbReference>
<dbReference type="EMBL" id="AY249902">
    <property type="protein sequence ID" value="AAP79575.1"/>
    <property type="status" value="JOINED"/>
    <property type="molecule type" value="Genomic_DNA"/>
</dbReference>
<dbReference type="EMBL" id="AY249908">
    <property type="protein sequence ID" value="AAP79576.1"/>
    <property type="molecule type" value="Genomic_DNA"/>
</dbReference>
<dbReference type="EMBL" id="AY249901">
    <property type="protein sequence ID" value="AAP79576.1"/>
    <property type="status" value="JOINED"/>
    <property type="molecule type" value="Genomic_DNA"/>
</dbReference>
<dbReference type="EMBL" id="AY249902">
    <property type="protein sequence ID" value="AAP79576.1"/>
    <property type="status" value="JOINED"/>
    <property type="molecule type" value="Genomic_DNA"/>
</dbReference>
<dbReference type="EMBL" id="AY249904">
    <property type="protein sequence ID" value="AAP79576.1"/>
    <property type="status" value="JOINED"/>
    <property type="molecule type" value="Genomic_DNA"/>
</dbReference>
<dbReference type="EMBL" id="AY249905">
    <property type="protein sequence ID" value="AAP79576.1"/>
    <property type="status" value="JOINED"/>
    <property type="molecule type" value="Genomic_DNA"/>
</dbReference>
<dbReference type="EMBL" id="AY249906">
    <property type="protein sequence ID" value="AAP79576.1"/>
    <property type="status" value="JOINED"/>
    <property type="molecule type" value="Genomic_DNA"/>
</dbReference>
<dbReference type="EMBL" id="AY249907">
    <property type="protein sequence ID" value="AAP79576.1"/>
    <property type="status" value="JOINED"/>
    <property type="molecule type" value="Genomic_DNA"/>
</dbReference>
<dbReference type="SMR" id="Q6X862"/>
<dbReference type="FunCoup" id="Q6X862">
    <property type="interactions" value="5"/>
</dbReference>
<dbReference type="STRING" id="9593.ENSGGOP00000031316"/>
<dbReference type="GlyCosmos" id="Q6X862">
    <property type="glycosylation" value="6 sites, No reported glycans"/>
</dbReference>
<dbReference type="eggNOG" id="ENOG502QPMK">
    <property type="taxonomic scope" value="Eukaryota"/>
</dbReference>
<dbReference type="InParanoid" id="Q6X862"/>
<dbReference type="Proteomes" id="UP000001519">
    <property type="component" value="Unplaced"/>
</dbReference>
<dbReference type="GO" id="GO:0005886">
    <property type="term" value="C:plasma membrane"/>
    <property type="evidence" value="ECO:0000318"/>
    <property type="project" value="GO_Central"/>
</dbReference>
<dbReference type="GO" id="GO:0005509">
    <property type="term" value="F:calcium ion binding"/>
    <property type="evidence" value="ECO:0007669"/>
    <property type="project" value="InterPro"/>
</dbReference>
<dbReference type="GO" id="GO:0007155">
    <property type="term" value="P:cell adhesion"/>
    <property type="evidence" value="ECO:0000318"/>
    <property type="project" value="GO_Central"/>
</dbReference>
<dbReference type="GO" id="GO:0007156">
    <property type="term" value="P:homophilic cell adhesion via plasma membrane adhesion molecules"/>
    <property type="evidence" value="ECO:0007669"/>
    <property type="project" value="InterPro"/>
</dbReference>
<dbReference type="CDD" id="cd11304">
    <property type="entry name" value="Cadherin_repeat"/>
    <property type="match status" value="5"/>
</dbReference>
<dbReference type="FunFam" id="2.60.40.60:FF:000005">
    <property type="entry name" value="Protocadherin 9"/>
    <property type="match status" value="2"/>
</dbReference>
<dbReference type="FunFam" id="2.60.40.60:FF:000016">
    <property type="entry name" value="Protocadherin 9"/>
    <property type="match status" value="1"/>
</dbReference>
<dbReference type="FunFam" id="2.60.40.60:FF:000030">
    <property type="entry name" value="Protocadherin 9"/>
    <property type="match status" value="1"/>
</dbReference>
<dbReference type="FunFam" id="2.60.40.60:FF:000036">
    <property type="entry name" value="Protocadherin 9"/>
    <property type="match status" value="1"/>
</dbReference>
<dbReference type="FunFam" id="2.60.40.60:FF:000069">
    <property type="entry name" value="Protocadherin-11 X-linked"/>
    <property type="match status" value="1"/>
</dbReference>
<dbReference type="FunFam" id="2.60.40.60:FF:000077">
    <property type="entry name" value="Protocadherin-11 X-linked"/>
    <property type="match status" value="1"/>
</dbReference>
<dbReference type="Gene3D" id="2.60.40.60">
    <property type="entry name" value="Cadherins"/>
    <property type="match status" value="7"/>
</dbReference>
<dbReference type="InterPro" id="IPR002126">
    <property type="entry name" value="Cadherin-like_dom"/>
</dbReference>
<dbReference type="InterPro" id="IPR015919">
    <property type="entry name" value="Cadherin-like_sf"/>
</dbReference>
<dbReference type="InterPro" id="IPR020894">
    <property type="entry name" value="Cadherin_CS"/>
</dbReference>
<dbReference type="InterPro" id="IPR013164">
    <property type="entry name" value="Cadherin_N"/>
</dbReference>
<dbReference type="InterPro" id="IPR013585">
    <property type="entry name" value="Protocadherin"/>
</dbReference>
<dbReference type="InterPro" id="IPR050174">
    <property type="entry name" value="Protocadherin/Cadherin-CA"/>
</dbReference>
<dbReference type="PANTHER" id="PTHR24028">
    <property type="entry name" value="CADHERIN-87A"/>
    <property type="match status" value="1"/>
</dbReference>
<dbReference type="PANTHER" id="PTHR24028:SF254">
    <property type="entry name" value="PROTOCADHERIN-11 X-LINKED-RELATED"/>
    <property type="match status" value="1"/>
</dbReference>
<dbReference type="Pfam" id="PF00028">
    <property type="entry name" value="Cadherin"/>
    <property type="match status" value="6"/>
</dbReference>
<dbReference type="Pfam" id="PF08266">
    <property type="entry name" value="Cadherin_2"/>
    <property type="match status" value="1"/>
</dbReference>
<dbReference type="Pfam" id="PF08374">
    <property type="entry name" value="Protocadherin"/>
    <property type="match status" value="1"/>
</dbReference>
<dbReference type="PRINTS" id="PR00205">
    <property type="entry name" value="CADHERIN"/>
</dbReference>
<dbReference type="SMART" id="SM00112">
    <property type="entry name" value="CA"/>
    <property type="match status" value="6"/>
</dbReference>
<dbReference type="SUPFAM" id="SSF49313">
    <property type="entry name" value="Cadherin-like"/>
    <property type="match status" value="6"/>
</dbReference>
<dbReference type="PROSITE" id="PS00232">
    <property type="entry name" value="CADHERIN_1"/>
    <property type="match status" value="5"/>
</dbReference>
<dbReference type="PROSITE" id="PS50268">
    <property type="entry name" value="CADHERIN_2"/>
    <property type="match status" value="7"/>
</dbReference>
<organism>
    <name type="scientific">Gorilla gorilla gorilla</name>
    <name type="common">Western lowland gorilla</name>
    <dbReference type="NCBI Taxonomy" id="9595"/>
    <lineage>
        <taxon>Eukaryota</taxon>
        <taxon>Metazoa</taxon>
        <taxon>Chordata</taxon>
        <taxon>Craniata</taxon>
        <taxon>Vertebrata</taxon>
        <taxon>Euteleostomi</taxon>
        <taxon>Mammalia</taxon>
        <taxon>Eutheria</taxon>
        <taxon>Euarchontoglires</taxon>
        <taxon>Primates</taxon>
        <taxon>Haplorrhini</taxon>
        <taxon>Catarrhini</taxon>
        <taxon>Hominidae</taxon>
        <taxon>Gorilla</taxon>
    </lineage>
</organism>